<keyword id="KW-0131">Cell cycle</keyword>
<keyword id="KW-0132">Cell division</keyword>
<keyword id="KW-0997">Cell inner membrane</keyword>
<keyword id="KW-1003">Cell membrane</keyword>
<keyword id="KW-0133">Cell shape</keyword>
<keyword id="KW-0961">Cell wall biogenesis/degradation</keyword>
<keyword id="KW-0328">Glycosyltransferase</keyword>
<keyword id="KW-0472">Membrane</keyword>
<keyword id="KW-0573">Peptidoglycan synthesis</keyword>
<keyword id="KW-0808">Transferase</keyword>
<keyword id="KW-0812">Transmembrane</keyword>
<keyword id="KW-1133">Transmembrane helix</keyword>
<organism>
    <name type="scientific">Geobacter sp. (strain M18)</name>
    <dbReference type="NCBI Taxonomy" id="443143"/>
    <lineage>
        <taxon>Bacteria</taxon>
        <taxon>Pseudomonadati</taxon>
        <taxon>Thermodesulfobacteriota</taxon>
        <taxon>Desulfuromonadia</taxon>
        <taxon>Geobacterales</taxon>
        <taxon>Geobacteraceae</taxon>
        <taxon>Geobacter</taxon>
    </lineage>
</organism>
<name>FTSW_GEOS8</name>
<protein>
    <recommendedName>
        <fullName evidence="2">Probable peptidoglycan glycosyltransferase FtsW</fullName>
        <shortName evidence="2">PGT</shortName>
        <ecNumber evidence="2">2.4.99.28</ecNumber>
    </recommendedName>
    <alternativeName>
        <fullName evidence="2">Cell division protein FtsW</fullName>
    </alternativeName>
    <alternativeName>
        <fullName evidence="2">Cell wall polymerase</fullName>
    </alternativeName>
    <alternativeName>
        <fullName evidence="2">Peptidoglycan polymerase</fullName>
        <shortName evidence="2">PG polymerase</shortName>
    </alternativeName>
</protein>
<comment type="function">
    <text evidence="2">Peptidoglycan polymerase that is essential for cell division.</text>
</comment>
<comment type="catalytic activity">
    <reaction evidence="2">
        <text>[GlcNAc-(1-&gt;4)-Mur2Ac(oyl-L-Ala-gamma-D-Glu-L-Lys-D-Ala-D-Ala)](n)-di-trans,octa-cis-undecaprenyl diphosphate + beta-D-GlcNAc-(1-&gt;4)-Mur2Ac(oyl-L-Ala-gamma-D-Glu-L-Lys-D-Ala-D-Ala)-di-trans,octa-cis-undecaprenyl diphosphate = [GlcNAc-(1-&gt;4)-Mur2Ac(oyl-L-Ala-gamma-D-Glu-L-Lys-D-Ala-D-Ala)](n+1)-di-trans,octa-cis-undecaprenyl diphosphate + di-trans,octa-cis-undecaprenyl diphosphate + H(+)</text>
        <dbReference type="Rhea" id="RHEA:23708"/>
        <dbReference type="Rhea" id="RHEA-COMP:9602"/>
        <dbReference type="Rhea" id="RHEA-COMP:9603"/>
        <dbReference type="ChEBI" id="CHEBI:15378"/>
        <dbReference type="ChEBI" id="CHEBI:58405"/>
        <dbReference type="ChEBI" id="CHEBI:60033"/>
        <dbReference type="ChEBI" id="CHEBI:78435"/>
        <dbReference type="EC" id="2.4.99.28"/>
    </reaction>
</comment>
<comment type="pathway">
    <text evidence="2">Cell wall biogenesis; peptidoglycan biosynthesis.</text>
</comment>
<comment type="subcellular location">
    <subcellularLocation>
        <location evidence="2">Cell inner membrane</location>
        <topology evidence="2">Multi-pass membrane protein</topology>
    </subcellularLocation>
    <text evidence="2">Localizes to the division septum.</text>
</comment>
<comment type="similarity">
    <text evidence="2">Belongs to the SEDS family. FtsW subfamily.</text>
</comment>
<accession>E8WSG3</accession>
<reference key="1">
    <citation type="submission" date="2011-01" db="EMBL/GenBank/DDBJ databases">
        <title>Complete sequence of Geobacter sp. M18.</title>
        <authorList>
            <consortium name="US DOE Joint Genome Institute"/>
            <person name="Lucas S."/>
            <person name="Copeland A."/>
            <person name="Lapidus A."/>
            <person name="Cheng J.-F."/>
            <person name="Goodwin L."/>
            <person name="Pitluck S."/>
            <person name="Chertkov O."/>
            <person name="Munk C."/>
            <person name="Detter J.C."/>
            <person name="Han C."/>
            <person name="Tapia R."/>
            <person name="Land M."/>
            <person name="Hauser L."/>
            <person name="Kyrpides N."/>
            <person name="Ivanova N."/>
            <person name="Ovchinnikova G."/>
            <person name="Pagani I."/>
            <person name="Holmes D."/>
            <person name="Aklujkar M."/>
            <person name="Lovley D."/>
            <person name="Woyke T."/>
        </authorList>
    </citation>
    <scope>NUCLEOTIDE SEQUENCE [LARGE SCALE GENOMIC DNA]</scope>
    <source>
        <strain>M18</strain>
    </source>
</reference>
<sequence>MRRVEGYDMIVLMMAVILTCFGVVMVYSASSVMAAKKFHDGFFFLKRQSLYALIGFIGMGVAMHVDYHVWKKWAVPLFLGTFFLLLLVFVPGIGGTAKGASRWIRLPGFNFQPSELAKVALIMYMAYSLEKRQDKLKQFMSGFFPYMLILGVFIAVLLAQHDMGAALTMLAVAIVMLFAAGTKVQYILGMGLVALPGICYLVFTKAYRMRRITAFLDPWQDPTDAGFQIIQSWLALGTGGFFGQGLGEGKQKLFYLPEAHTDFILSVLGEEMGFIGVVVIASMFLLLVQRSIRVAIAAEDSFGRFLAFGIAILLGLEAFVNMAVVTGLLPTKGIALPFLSYGGSSLIISLCSVGVLLNVSTRMRGAA</sequence>
<evidence type="ECO:0000255" key="1"/>
<evidence type="ECO:0000255" key="2">
    <source>
        <dbReference type="HAMAP-Rule" id="MF_00913"/>
    </source>
</evidence>
<gene>
    <name evidence="2" type="primary">ftsW</name>
    <name type="ordered locus">GM18_3888</name>
</gene>
<dbReference type="EC" id="2.4.99.28" evidence="2"/>
<dbReference type="EMBL" id="CP002479">
    <property type="protein sequence ID" value="ADW15310.1"/>
    <property type="molecule type" value="Genomic_DNA"/>
</dbReference>
<dbReference type="SMR" id="E8WSG3"/>
<dbReference type="STRING" id="443143.GM18_3888"/>
<dbReference type="KEGG" id="geb:GM18_3888"/>
<dbReference type="eggNOG" id="COG0772">
    <property type="taxonomic scope" value="Bacteria"/>
</dbReference>
<dbReference type="HOGENOM" id="CLU_029243_0_1_7"/>
<dbReference type="OrthoDB" id="9768187at2"/>
<dbReference type="UniPathway" id="UPA00219"/>
<dbReference type="Proteomes" id="UP000001442">
    <property type="component" value="Chromosome"/>
</dbReference>
<dbReference type="GO" id="GO:0032153">
    <property type="term" value="C:cell division site"/>
    <property type="evidence" value="ECO:0007669"/>
    <property type="project" value="TreeGrafter"/>
</dbReference>
<dbReference type="GO" id="GO:0005886">
    <property type="term" value="C:plasma membrane"/>
    <property type="evidence" value="ECO:0007669"/>
    <property type="project" value="UniProtKB-SubCell"/>
</dbReference>
<dbReference type="GO" id="GO:0015648">
    <property type="term" value="F:lipid-linked peptidoglycan transporter activity"/>
    <property type="evidence" value="ECO:0007669"/>
    <property type="project" value="TreeGrafter"/>
</dbReference>
<dbReference type="GO" id="GO:0008955">
    <property type="term" value="F:peptidoglycan glycosyltransferase activity"/>
    <property type="evidence" value="ECO:0007669"/>
    <property type="project" value="RHEA"/>
</dbReference>
<dbReference type="GO" id="GO:0051301">
    <property type="term" value="P:cell division"/>
    <property type="evidence" value="ECO:0007669"/>
    <property type="project" value="UniProtKB-KW"/>
</dbReference>
<dbReference type="GO" id="GO:0071555">
    <property type="term" value="P:cell wall organization"/>
    <property type="evidence" value="ECO:0007669"/>
    <property type="project" value="UniProtKB-KW"/>
</dbReference>
<dbReference type="GO" id="GO:0009252">
    <property type="term" value="P:peptidoglycan biosynthetic process"/>
    <property type="evidence" value="ECO:0007669"/>
    <property type="project" value="UniProtKB-UniPathway"/>
</dbReference>
<dbReference type="GO" id="GO:0008360">
    <property type="term" value="P:regulation of cell shape"/>
    <property type="evidence" value="ECO:0007669"/>
    <property type="project" value="UniProtKB-KW"/>
</dbReference>
<dbReference type="HAMAP" id="MF_00913">
    <property type="entry name" value="PGT_FtsW_proteobact"/>
    <property type="match status" value="1"/>
</dbReference>
<dbReference type="InterPro" id="IPR018365">
    <property type="entry name" value="Cell_cycle_FtsW-rel_CS"/>
</dbReference>
<dbReference type="InterPro" id="IPR013437">
    <property type="entry name" value="FtsW"/>
</dbReference>
<dbReference type="InterPro" id="IPR001182">
    <property type="entry name" value="FtsW/RodA"/>
</dbReference>
<dbReference type="NCBIfam" id="TIGR02614">
    <property type="entry name" value="ftsW"/>
    <property type="match status" value="1"/>
</dbReference>
<dbReference type="PANTHER" id="PTHR30474">
    <property type="entry name" value="CELL CYCLE PROTEIN"/>
    <property type="match status" value="1"/>
</dbReference>
<dbReference type="PANTHER" id="PTHR30474:SF2">
    <property type="entry name" value="PEPTIDOGLYCAN GLYCOSYLTRANSFERASE FTSW-RELATED"/>
    <property type="match status" value="1"/>
</dbReference>
<dbReference type="Pfam" id="PF01098">
    <property type="entry name" value="FTSW_RODA_SPOVE"/>
    <property type="match status" value="1"/>
</dbReference>
<dbReference type="PROSITE" id="PS00428">
    <property type="entry name" value="FTSW_RODA_SPOVE"/>
    <property type="match status" value="1"/>
</dbReference>
<feature type="chain" id="PRO_0000415184" description="Probable peptidoglycan glycosyltransferase FtsW">
    <location>
        <begin position="1"/>
        <end position="367"/>
    </location>
</feature>
<feature type="topological domain" description="Cytoplasmic" evidence="1">
    <location>
        <begin position="1"/>
        <end position="8"/>
    </location>
</feature>
<feature type="transmembrane region" description="Helical" evidence="2">
    <location>
        <begin position="9"/>
        <end position="29"/>
    </location>
</feature>
<feature type="topological domain" description="Periplasmic" evidence="1">
    <location>
        <begin position="30"/>
        <end position="49"/>
    </location>
</feature>
<feature type="transmembrane region" description="Helical" evidence="2">
    <location>
        <begin position="50"/>
        <end position="70"/>
    </location>
</feature>
<feature type="topological domain" description="Cytoplasmic" evidence="1">
    <location>
        <begin position="71"/>
        <end position="72"/>
    </location>
</feature>
<feature type="transmembrane region" description="Helical" evidence="2">
    <location>
        <begin position="73"/>
        <end position="93"/>
    </location>
</feature>
<feature type="topological domain" description="Periplasmic" evidence="1">
    <location>
        <begin position="94"/>
        <end position="138"/>
    </location>
</feature>
<feature type="transmembrane region" description="Helical" evidence="2">
    <location>
        <begin position="139"/>
        <end position="159"/>
    </location>
</feature>
<feature type="topological domain" description="Cytoplasmic" evidence="1">
    <location>
        <begin position="160"/>
        <end position="161"/>
    </location>
</feature>
<feature type="transmembrane region" description="Helical" evidence="2">
    <location>
        <begin position="162"/>
        <end position="182"/>
    </location>
</feature>
<feature type="topological domain" description="Periplasmic" evidence="1">
    <location>
        <position position="183"/>
    </location>
</feature>
<feature type="transmembrane region" description="Helical" evidence="2">
    <location>
        <begin position="184"/>
        <end position="204"/>
    </location>
</feature>
<feature type="topological domain" description="Cytoplasmic" evidence="1">
    <location>
        <begin position="205"/>
        <end position="225"/>
    </location>
</feature>
<feature type="transmembrane region" description="Helical" evidence="2">
    <location>
        <begin position="226"/>
        <end position="246"/>
    </location>
</feature>
<feature type="topological domain" description="Periplasmic" evidence="1">
    <location>
        <begin position="247"/>
        <end position="266"/>
    </location>
</feature>
<feature type="transmembrane region" description="Helical" evidence="2">
    <location>
        <begin position="267"/>
        <end position="287"/>
    </location>
</feature>
<feature type="topological domain" description="Cytoplasmic" evidence="1">
    <location>
        <begin position="288"/>
        <end position="304"/>
    </location>
</feature>
<feature type="transmembrane region" description="Helical" evidence="2">
    <location>
        <begin position="305"/>
        <end position="325"/>
    </location>
</feature>
<feature type="topological domain" description="Periplasmic" evidence="1">
    <location>
        <begin position="326"/>
        <end position="335"/>
    </location>
</feature>
<feature type="transmembrane region" description="Helical" evidence="2">
    <location>
        <begin position="336"/>
        <end position="356"/>
    </location>
</feature>
<feature type="topological domain" description="Cytoplasmic" evidence="1">
    <location>
        <begin position="357"/>
        <end position="367"/>
    </location>
</feature>
<proteinExistence type="inferred from homology"/>